<name>EFP_SHELP</name>
<reference key="1">
    <citation type="submission" date="2007-03" db="EMBL/GenBank/DDBJ databases">
        <title>Complete sequence of Shewanella loihica PV-4.</title>
        <authorList>
            <consortium name="US DOE Joint Genome Institute"/>
            <person name="Copeland A."/>
            <person name="Lucas S."/>
            <person name="Lapidus A."/>
            <person name="Barry K."/>
            <person name="Detter J.C."/>
            <person name="Glavina del Rio T."/>
            <person name="Hammon N."/>
            <person name="Israni S."/>
            <person name="Dalin E."/>
            <person name="Tice H."/>
            <person name="Pitluck S."/>
            <person name="Chain P."/>
            <person name="Malfatti S."/>
            <person name="Shin M."/>
            <person name="Vergez L."/>
            <person name="Schmutz J."/>
            <person name="Larimer F."/>
            <person name="Land M."/>
            <person name="Hauser L."/>
            <person name="Kyrpides N."/>
            <person name="Mikhailova N."/>
            <person name="Romine M.F."/>
            <person name="Serres G."/>
            <person name="Fredrickson J."/>
            <person name="Tiedje J."/>
            <person name="Richardson P."/>
        </authorList>
    </citation>
    <scope>NUCLEOTIDE SEQUENCE [LARGE SCALE GENOMIC DNA]</scope>
    <source>
        <strain>ATCC BAA-1088 / PV-4</strain>
    </source>
</reference>
<accession>A3QE83</accession>
<comment type="function">
    <text evidence="1">Involved in peptide bond synthesis. Stimulates efficient translation and peptide-bond synthesis on native or reconstituted 70S ribosomes in vitro. Probably functions indirectly by altering the affinity of the ribosome for aminoacyl-tRNA, thus increasing their reactivity as acceptors for peptidyl transferase.</text>
</comment>
<comment type="pathway">
    <text evidence="1">Protein biosynthesis; polypeptide chain elongation.</text>
</comment>
<comment type="subcellular location">
    <subcellularLocation>
        <location evidence="1">Cytoplasm</location>
    </subcellularLocation>
</comment>
<comment type="similarity">
    <text evidence="1">Belongs to the elongation factor P family.</text>
</comment>
<keyword id="KW-0963">Cytoplasm</keyword>
<keyword id="KW-0251">Elongation factor</keyword>
<keyword id="KW-0648">Protein biosynthesis</keyword>
<keyword id="KW-1185">Reference proteome</keyword>
<dbReference type="EMBL" id="CP000606">
    <property type="protein sequence ID" value="ABO23781.1"/>
    <property type="molecule type" value="Genomic_DNA"/>
</dbReference>
<dbReference type="RefSeq" id="WP_011865713.1">
    <property type="nucleotide sequence ID" value="NC_009092.1"/>
</dbReference>
<dbReference type="SMR" id="A3QE83"/>
<dbReference type="STRING" id="323850.Shew_1915"/>
<dbReference type="KEGG" id="slo:Shew_1915"/>
<dbReference type="eggNOG" id="COG0231">
    <property type="taxonomic scope" value="Bacteria"/>
</dbReference>
<dbReference type="HOGENOM" id="CLU_074944_2_1_6"/>
<dbReference type="OrthoDB" id="9801844at2"/>
<dbReference type="UniPathway" id="UPA00345"/>
<dbReference type="Proteomes" id="UP000001558">
    <property type="component" value="Chromosome"/>
</dbReference>
<dbReference type="GO" id="GO:0005737">
    <property type="term" value="C:cytoplasm"/>
    <property type="evidence" value="ECO:0007669"/>
    <property type="project" value="UniProtKB-SubCell"/>
</dbReference>
<dbReference type="GO" id="GO:0003746">
    <property type="term" value="F:translation elongation factor activity"/>
    <property type="evidence" value="ECO:0007669"/>
    <property type="project" value="UniProtKB-UniRule"/>
</dbReference>
<dbReference type="GO" id="GO:0043043">
    <property type="term" value="P:peptide biosynthetic process"/>
    <property type="evidence" value="ECO:0007669"/>
    <property type="project" value="InterPro"/>
</dbReference>
<dbReference type="CDD" id="cd04470">
    <property type="entry name" value="S1_EF-P_repeat_1"/>
    <property type="match status" value="1"/>
</dbReference>
<dbReference type="CDD" id="cd05794">
    <property type="entry name" value="S1_EF-P_repeat_2"/>
    <property type="match status" value="1"/>
</dbReference>
<dbReference type="FunFam" id="2.30.30.30:FF:000003">
    <property type="entry name" value="Elongation factor P"/>
    <property type="match status" value="1"/>
</dbReference>
<dbReference type="FunFam" id="2.40.50.140:FF:000004">
    <property type="entry name" value="Elongation factor P"/>
    <property type="match status" value="1"/>
</dbReference>
<dbReference type="FunFam" id="2.40.50.140:FF:000009">
    <property type="entry name" value="Elongation factor P"/>
    <property type="match status" value="1"/>
</dbReference>
<dbReference type="Gene3D" id="2.30.30.30">
    <property type="match status" value="1"/>
</dbReference>
<dbReference type="Gene3D" id="2.40.50.140">
    <property type="entry name" value="Nucleic acid-binding proteins"/>
    <property type="match status" value="2"/>
</dbReference>
<dbReference type="HAMAP" id="MF_00141">
    <property type="entry name" value="EF_P"/>
    <property type="match status" value="1"/>
</dbReference>
<dbReference type="InterPro" id="IPR015365">
    <property type="entry name" value="Elong-fact-P_C"/>
</dbReference>
<dbReference type="InterPro" id="IPR012340">
    <property type="entry name" value="NA-bd_OB-fold"/>
</dbReference>
<dbReference type="InterPro" id="IPR014722">
    <property type="entry name" value="Rib_uL2_dom2"/>
</dbReference>
<dbReference type="InterPro" id="IPR020599">
    <property type="entry name" value="Transl_elong_fac_P/YeiP"/>
</dbReference>
<dbReference type="InterPro" id="IPR013185">
    <property type="entry name" value="Transl_elong_KOW-like"/>
</dbReference>
<dbReference type="InterPro" id="IPR001059">
    <property type="entry name" value="Transl_elong_P/YeiP_cen"/>
</dbReference>
<dbReference type="InterPro" id="IPR011768">
    <property type="entry name" value="Transl_elongation_fac_P"/>
</dbReference>
<dbReference type="InterPro" id="IPR008991">
    <property type="entry name" value="Translation_prot_SH3-like_sf"/>
</dbReference>
<dbReference type="NCBIfam" id="TIGR00038">
    <property type="entry name" value="efp"/>
    <property type="match status" value="1"/>
</dbReference>
<dbReference type="NCBIfam" id="NF001810">
    <property type="entry name" value="PRK00529.1"/>
    <property type="match status" value="1"/>
</dbReference>
<dbReference type="PANTHER" id="PTHR30053">
    <property type="entry name" value="ELONGATION FACTOR P"/>
    <property type="match status" value="1"/>
</dbReference>
<dbReference type="PANTHER" id="PTHR30053:SF12">
    <property type="entry name" value="ELONGATION FACTOR P (EF-P) FAMILY PROTEIN"/>
    <property type="match status" value="1"/>
</dbReference>
<dbReference type="Pfam" id="PF01132">
    <property type="entry name" value="EFP"/>
    <property type="match status" value="1"/>
</dbReference>
<dbReference type="Pfam" id="PF08207">
    <property type="entry name" value="EFP_N"/>
    <property type="match status" value="1"/>
</dbReference>
<dbReference type="Pfam" id="PF09285">
    <property type="entry name" value="Elong-fact-P_C"/>
    <property type="match status" value="1"/>
</dbReference>
<dbReference type="PIRSF" id="PIRSF005901">
    <property type="entry name" value="EF-P"/>
    <property type="match status" value="1"/>
</dbReference>
<dbReference type="SMART" id="SM01185">
    <property type="entry name" value="EFP"/>
    <property type="match status" value="1"/>
</dbReference>
<dbReference type="SMART" id="SM00841">
    <property type="entry name" value="Elong-fact-P_C"/>
    <property type="match status" value="1"/>
</dbReference>
<dbReference type="SUPFAM" id="SSF50249">
    <property type="entry name" value="Nucleic acid-binding proteins"/>
    <property type="match status" value="2"/>
</dbReference>
<dbReference type="SUPFAM" id="SSF50104">
    <property type="entry name" value="Translation proteins SH3-like domain"/>
    <property type="match status" value="1"/>
</dbReference>
<gene>
    <name evidence="1" type="primary">efp</name>
    <name type="ordered locus">Shew_1915</name>
</gene>
<proteinExistence type="inferred from homology"/>
<sequence length="186" mass="20701">MKTAHEIRPGNVIMLDGSPWVVQKTETTRSGRNAAIVKMKLKNLLQESSTETTFKGEDKMEDIILDRLDCTYSYFADPMYVFMDAEYNQYDVEADNLGDAAAYIVDGMEEQCQVTFYEGKAISVELPTTVVREVTYTEPSARGDTSGKVMKPATIAGGATLSVADFVKTGDLIEIDTRTHEFKKRA</sequence>
<protein>
    <recommendedName>
        <fullName evidence="1">Elongation factor P</fullName>
        <shortName evidence="1">EF-P</shortName>
    </recommendedName>
</protein>
<organism>
    <name type="scientific">Shewanella loihica (strain ATCC BAA-1088 / PV-4)</name>
    <dbReference type="NCBI Taxonomy" id="323850"/>
    <lineage>
        <taxon>Bacteria</taxon>
        <taxon>Pseudomonadati</taxon>
        <taxon>Pseudomonadota</taxon>
        <taxon>Gammaproteobacteria</taxon>
        <taxon>Alteromonadales</taxon>
        <taxon>Shewanellaceae</taxon>
        <taxon>Shewanella</taxon>
    </lineage>
</organism>
<evidence type="ECO:0000255" key="1">
    <source>
        <dbReference type="HAMAP-Rule" id="MF_00141"/>
    </source>
</evidence>
<feature type="chain" id="PRO_1000010849" description="Elongation factor P">
    <location>
        <begin position="1"/>
        <end position="186"/>
    </location>
</feature>